<keyword id="KW-0002">3D-structure</keyword>
<keyword id="KW-0044">Antibiotic</keyword>
<keyword id="KW-0929">Antimicrobial</keyword>
<keyword id="KW-0204">Cytolysis</keyword>
<keyword id="KW-0903">Direct protein sequencing</keyword>
<keyword id="KW-1015">Disulfide bond</keyword>
<keyword id="KW-0354">Hemolysis</keyword>
<keyword id="KW-0406">Ion transport</keyword>
<keyword id="KW-0472">Membrane</keyword>
<keyword id="KW-0964">Secreted</keyword>
<keyword id="KW-1052">Target cell membrane</keyword>
<keyword id="KW-1053">Target membrane</keyword>
<keyword id="KW-0800">Toxin</keyword>
<keyword id="KW-0812">Transmembrane</keyword>
<keyword id="KW-0813">Transport</keyword>
<protein>
    <recommendedName>
        <fullName evidence="13">Lysenin</fullName>
    </recommendedName>
    <alternativeName>
        <fullName evidence="12">Beta-barrel pore-forming toxin</fullName>
        <shortName evidence="11 12">Beta-PFT</shortName>
    </alternativeName>
    <alternativeName>
        <fullName evidence="12">Invertebrate cytolysin pore</fullName>
    </alternativeName>
    <alternativeName>
        <fullName evidence="13">efL1</fullName>
    </alternativeName>
</protein>
<dbReference type="EMBL" id="D85846">
    <property type="protein sequence ID" value="BAA21518.1"/>
    <property type="molecule type" value="mRNA"/>
</dbReference>
<dbReference type="PDB" id="3ZX7">
    <property type="method" value="X-ray"/>
    <property type="resolution" value="2.84 A"/>
    <property type="chains" value="A=2-297"/>
</dbReference>
<dbReference type="PDB" id="3ZXD">
    <property type="method" value="X-ray"/>
    <property type="resolution" value="3.30 A"/>
    <property type="chains" value="A/B/C/D=2-297"/>
</dbReference>
<dbReference type="PDB" id="3ZXG">
    <property type="method" value="X-ray"/>
    <property type="resolution" value="3.12 A"/>
    <property type="chains" value="A/B=2-297"/>
</dbReference>
<dbReference type="PDB" id="5EC5">
    <property type="method" value="X-ray"/>
    <property type="resolution" value="3.10 A"/>
    <property type="chains" value="A/B/C/D/E/F/G/H/I/J/K/L/M/N/O/P/R/S=1-297"/>
</dbReference>
<dbReference type="PDB" id="5GAQ">
    <property type="method" value="EM"/>
    <property type="resolution" value="3.14 A"/>
    <property type="chains" value="A/B/C/D/E/F/G/H/I=1-297"/>
</dbReference>
<dbReference type="PDBsum" id="3ZX7"/>
<dbReference type="PDBsum" id="3ZXD"/>
<dbReference type="PDBsum" id="3ZXG"/>
<dbReference type="PDBsum" id="5EC5"/>
<dbReference type="PDBsum" id="5GAQ"/>
<dbReference type="EMDB" id="EMD-8015"/>
<dbReference type="SMR" id="O18423"/>
<dbReference type="DIP" id="DIP-59857N"/>
<dbReference type="TCDB" id="1.C.43.1.1">
    <property type="family name" value="the earthworm lysenin toxin (lysenin) family"/>
</dbReference>
<dbReference type="EvolutionaryTrace" id="O18423"/>
<dbReference type="GO" id="GO:0005576">
    <property type="term" value="C:extracellular region"/>
    <property type="evidence" value="ECO:0007669"/>
    <property type="project" value="UniProtKB-SubCell"/>
</dbReference>
<dbReference type="GO" id="GO:0016020">
    <property type="term" value="C:membrane"/>
    <property type="evidence" value="ECO:0007669"/>
    <property type="project" value="UniProtKB-KW"/>
</dbReference>
<dbReference type="GO" id="GO:0044218">
    <property type="term" value="C:other organism cell membrane"/>
    <property type="evidence" value="ECO:0007669"/>
    <property type="project" value="UniProtKB-KW"/>
</dbReference>
<dbReference type="GO" id="GO:0090729">
    <property type="term" value="F:toxin activity"/>
    <property type="evidence" value="ECO:0007669"/>
    <property type="project" value="UniProtKB-KW"/>
</dbReference>
<dbReference type="GO" id="GO:0042742">
    <property type="term" value="P:defense response to bacterium"/>
    <property type="evidence" value="ECO:0007669"/>
    <property type="project" value="UniProtKB-KW"/>
</dbReference>
<dbReference type="GO" id="GO:0031640">
    <property type="term" value="P:killing of cells of another organism"/>
    <property type="evidence" value="ECO:0007669"/>
    <property type="project" value="UniProtKB-KW"/>
</dbReference>
<dbReference type="GO" id="GO:0006811">
    <property type="term" value="P:monoatomic ion transport"/>
    <property type="evidence" value="ECO:0007669"/>
    <property type="project" value="UniProtKB-KW"/>
</dbReference>
<dbReference type="CDD" id="cd20225">
    <property type="entry name" value="PFM_lysenin-like"/>
    <property type="match status" value="1"/>
</dbReference>
<dbReference type="Gene3D" id="2.60.120.980">
    <property type="match status" value="1"/>
</dbReference>
<dbReference type="Gene3D" id="2.80.10.50">
    <property type="match status" value="1"/>
</dbReference>
<feature type="chain" id="PRO_0000342606" description="Lysenin" evidence="17">
    <location>
        <begin position="1"/>
        <end position="297"/>
    </location>
</feature>
<feature type="region of interest" description="N-terminal cap domain" evidence="15">
    <location>
        <begin position="10"/>
        <end position="33"/>
    </location>
</feature>
<feature type="region of interest" description="Beta-hairpin domain" evidence="15">
    <location>
        <begin position="34"/>
        <end position="107"/>
    </location>
</feature>
<feature type="region of interest" description="N-terminal cap domain" evidence="15">
    <location>
        <begin position="108"/>
        <end position="156"/>
    </location>
</feature>
<feature type="region of interest" description="C-terminal receptor-binding domain" evidence="15">
    <location>
        <begin position="157"/>
        <end position="297"/>
    </location>
</feature>
<feature type="binding site" evidence="6">
    <location>
        <position position="185"/>
    </location>
    <ligand>
        <name>an N-(acyl)-sphingosylphosphocholine</name>
        <dbReference type="ChEBI" id="CHEBI:64583"/>
    </ligand>
</feature>
<feature type="binding site" evidence="6">
    <location>
        <position position="227"/>
    </location>
    <ligand>
        <name>an N-(acyl)-sphingosylphosphocholine</name>
        <dbReference type="ChEBI" id="CHEBI:64583"/>
    </ligand>
</feature>
<feature type="binding site" evidence="6">
    <location>
        <position position="233"/>
    </location>
    <ligand>
        <name>an N-(acyl)-sphingosylphosphocholine</name>
        <dbReference type="ChEBI" id="CHEBI:64583"/>
    </ligand>
</feature>
<feature type="binding site" evidence="6">
    <location>
        <position position="282"/>
    </location>
    <ligand>
        <name>an N-(acyl)-sphingosylphosphocholine</name>
        <dbReference type="ChEBI" id="CHEBI:64583"/>
    </ligand>
</feature>
<feature type="site" description="Crucial for binding sphingomyelin and inducing hemolysis" evidence="4">
    <location>
        <position position="20"/>
    </location>
</feature>
<feature type="site" description="Crucial for binding sphingomyelin and important for inducing hemolysis" evidence="4">
    <location>
        <position position="187"/>
    </location>
</feature>
<feature type="site" description="Important for activity">
    <location>
        <position position="209"/>
    </location>
</feature>
<feature type="site" description="Crucial for binding sphingomyelin and inducing hemolysis" evidence="4">
    <location>
        <position position="245"/>
    </location>
</feature>
<feature type="site" description="Crucial for binding sphingomyelin and inducing hemolysis" evidence="4">
    <location>
        <position position="291"/>
    </location>
</feature>
<feature type="disulfide bond" evidence="1">
    <location>
        <begin position="272"/>
        <end position="283"/>
    </location>
</feature>
<feature type="mutagenesis site" description="Loss of ability to bind sphingomyelin, and to induce hemolysis." evidence="4">
    <original>W</original>
    <variation>A</variation>
    <location>
        <position position="20"/>
    </location>
</feature>
<feature type="mutagenesis site" description="Decrease in ability to bind sphingomyelin and to lyse cells." evidence="6">
    <original>K</original>
    <variation>A</variation>
    <location>
        <position position="21"/>
    </location>
</feature>
<feature type="mutagenesis site" description="In double Tyr mutant; almost complete loss of ability to bind sphingomyelin and to lyse cells; when associated with A-26." evidence="6">
    <original>Y</original>
    <variation>A</variation>
    <location>
        <position position="24"/>
    </location>
</feature>
<feature type="mutagenesis site" description="In double Tyr mutant; almost complete loss of ability to bind sphingomyelin and to lyse cells; when associated with A-24." evidence="6">
    <original>Y</original>
    <variation>A</variation>
    <location>
        <position position="26"/>
    </location>
</feature>
<feature type="mutagenesis site" description="In double Cys mutant; complete loss of ability to form pores when Cys are disulfide-linked; when associated with C-131." evidence="8">
    <original>V</original>
    <variation>C</variation>
    <location>
        <position position="88"/>
    </location>
</feature>
<feature type="mutagenesis site" description="Decrease in ability to bind sphingomyelin and to lyse cells." evidence="6">
    <original>Q</original>
    <variation>A</variation>
    <location>
        <position position="117"/>
    </location>
</feature>
<feature type="mutagenesis site" description="Decrease in ability to bind sphingomyelin and to lyse cells." evidence="6">
    <original>E</original>
    <variation>A</variation>
    <location>
        <position position="128"/>
    </location>
</feature>
<feature type="mutagenesis site" description="In double Cys mutant; complete loss of ability to form pores when Cys are disulfide-linked; when associated with C-88." evidence="8">
    <original>Y</original>
    <variation>C</variation>
    <location>
        <position position="131"/>
    </location>
</feature>
<feature type="mutagenesis site" description="Loss of ability to bind sphingomyelin, and induces hemolysis only at high concentration." evidence="4">
    <original>W</original>
    <variation>A</variation>
    <location>
        <position position="187"/>
    </location>
</feature>
<feature type="mutagenesis site" description="Does not affect binding, and has little loss of hemolytic activity." evidence="4">
    <original>W</original>
    <variation>A</variation>
    <location>
        <position position="206"/>
    </location>
</feature>
<feature type="mutagenesis site" description="Loss of ability to bind sphingomyelin, and to induce hemolysis." evidence="4">
    <original>W</original>
    <variation>A</variation>
    <location>
        <position position="245"/>
    </location>
</feature>
<feature type="mutagenesis site" description="Loss of ability to bind sphingomyelin, and to induce hemolysis." evidence="4">
    <original>W</original>
    <variation>A</variation>
    <location>
        <position position="291"/>
    </location>
</feature>
<feature type="strand" evidence="23">
    <location>
        <begin position="9"/>
        <end position="15"/>
    </location>
</feature>
<feature type="strand" evidence="23">
    <location>
        <begin position="17"/>
        <end position="28"/>
    </location>
</feature>
<feature type="strand" evidence="23">
    <location>
        <begin position="30"/>
        <end position="32"/>
    </location>
</feature>
<feature type="strand" evidence="23">
    <location>
        <begin position="34"/>
        <end position="44"/>
    </location>
</feature>
<feature type="turn" evidence="23">
    <location>
        <begin position="61"/>
        <end position="63"/>
    </location>
</feature>
<feature type="strand" evidence="23">
    <location>
        <begin position="69"/>
        <end position="80"/>
    </location>
</feature>
<feature type="strand" evidence="23">
    <location>
        <begin position="82"/>
        <end position="90"/>
    </location>
</feature>
<feature type="helix" evidence="23">
    <location>
        <begin position="92"/>
        <end position="95"/>
    </location>
</feature>
<feature type="strand" evidence="23">
    <location>
        <begin position="99"/>
        <end position="107"/>
    </location>
</feature>
<feature type="strand" evidence="23">
    <location>
        <begin position="111"/>
        <end position="122"/>
    </location>
</feature>
<feature type="strand" evidence="23">
    <location>
        <begin position="125"/>
        <end position="132"/>
    </location>
</feature>
<feature type="strand" evidence="23">
    <location>
        <begin position="136"/>
        <end position="138"/>
    </location>
</feature>
<feature type="strand" evidence="23">
    <location>
        <begin position="147"/>
        <end position="158"/>
    </location>
</feature>
<feature type="turn" evidence="23">
    <location>
        <begin position="163"/>
        <end position="165"/>
    </location>
</feature>
<feature type="strand" evidence="23">
    <location>
        <begin position="167"/>
        <end position="172"/>
    </location>
</feature>
<feature type="turn" evidence="23">
    <location>
        <begin position="173"/>
        <end position="176"/>
    </location>
</feature>
<feature type="strand" evidence="23">
    <location>
        <begin position="177"/>
        <end position="184"/>
    </location>
</feature>
<feature type="strand" evidence="23">
    <location>
        <begin position="187"/>
        <end position="194"/>
    </location>
</feature>
<feature type="strand" evidence="23">
    <location>
        <begin position="200"/>
        <end position="205"/>
    </location>
</feature>
<feature type="strand" evidence="23">
    <location>
        <begin position="208"/>
        <end position="214"/>
    </location>
</feature>
<feature type="strand" evidence="24">
    <location>
        <begin position="217"/>
        <end position="220"/>
    </location>
</feature>
<feature type="strand" evidence="23">
    <location>
        <begin position="223"/>
        <end position="226"/>
    </location>
</feature>
<feature type="strand" evidence="23">
    <location>
        <begin position="231"/>
        <end position="235"/>
    </location>
</feature>
<feature type="helix" evidence="23">
    <location>
        <begin position="241"/>
        <end position="243"/>
    </location>
</feature>
<feature type="strand" evidence="23">
    <location>
        <begin position="245"/>
        <end position="249"/>
    </location>
</feature>
<feature type="strand" evidence="24">
    <location>
        <begin position="257"/>
        <end position="259"/>
    </location>
</feature>
<feature type="strand" evidence="23">
    <location>
        <begin position="261"/>
        <end position="266"/>
    </location>
</feature>
<feature type="strand" evidence="23">
    <location>
        <begin position="269"/>
        <end position="273"/>
    </location>
</feature>
<feature type="strand" evidence="23">
    <location>
        <begin position="281"/>
        <end position="285"/>
    </location>
</feature>
<feature type="strand" evidence="23">
    <location>
        <begin position="291"/>
        <end position="295"/>
    </location>
</feature>
<comment type="function">
    <text evidence="2 3 4 5 9 10">Pore-forming toxin that defensively acts against parasitic microorganisms by forming pores in sphingomyelin-containing membranes (PubMed:12676961, PubMed:9478988). Has hemolytic activity and is also cytotoxic to spermatozoa of some species of invertebrates and many species of vertebrates and to amphibian larvae, guinea pig polymorphonuclear leukocytes, chicken fibroblasts, normal spleen cells and various tumor cells (PubMed:10684578). Is lethal for various species of reptiles, amphibian, birds and mammals. Induces smooth muscle contraction (PubMed:9210594). It binds sphingomyelin and induces hemolysis in the same manner as lysenin-related protein 2, and is 10-fold more effective than lysenin-related protein 1 (PubMed:15274631).</text>
</comment>
<comment type="subunit">
    <text evidence="6 8">Binds to sphingomyelin as a monomer by using its C-terminal domain (PubMed:22819216). Forms a nonamer when sphingomyelin/lysenin ratio is lower than ca 500 (PubMed:27048994, PubMed:27176125). Oligomerization, but not binding, is influenced by the fluidity of sphingomyelin.</text>
</comment>
<comment type="subcellular location">
    <subcellularLocation>
        <location evidence="9">Secreted</location>
    </subcellularLocation>
    <subcellularLocation>
        <location evidence="9">Target cell membrane</location>
    </subcellularLocation>
    <text evidence="7 8">Forms a beta-barrel pore in the membrane.</text>
</comment>
<comment type="tissue specificity">
    <text evidence="9">Expressed by coelomocytes.</text>
</comment>
<comment type="biotechnology">
    <text evidence="16">This toxin represents an excellent tool for visualizing distribution and dynamics of sphingomyelin in cells.</text>
</comment>
<comment type="similarity">
    <text evidence="14">Belongs to the lysenin family.</text>
</comment>
<organism>
    <name type="scientific">Eisenia fetida</name>
    <name type="common">Red wiggler worm</name>
    <dbReference type="NCBI Taxonomy" id="6396"/>
    <lineage>
        <taxon>Eukaryota</taxon>
        <taxon>Metazoa</taxon>
        <taxon>Spiralia</taxon>
        <taxon>Lophotrochozoa</taxon>
        <taxon>Annelida</taxon>
        <taxon>Clitellata</taxon>
        <taxon>Oligochaeta</taxon>
        <taxon>Crassiclitellata</taxon>
        <taxon>Lumbricina</taxon>
        <taxon>Lumbricidae</taxon>
        <taxon>Lumbricinae</taxon>
        <taxon>Eisenia</taxon>
    </lineage>
</organism>
<reference key="1">
    <citation type="journal article" date="1997" name="Gene">
        <title>Molecular cloning of cDNA for lysenin, a novel protein in the earthworm Eisenia foetida that causes contraction of rat vascular smooth muscle.</title>
        <authorList>
            <person name="Sekizawa Y."/>
            <person name="Kubo T."/>
            <person name="Kobayashi H."/>
            <person name="Nakajima T."/>
            <person name="Natori S."/>
        </authorList>
    </citation>
    <scope>NUCLEOTIDE SEQUENCE [MRNA]</scope>
    <scope>PROTEIN SEQUENCE OF 45-61; 100-122; 131-149; 186-205; 218-237 AND 250-277</scope>
    <scope>FUNCTION</scope>
    <scope>SUBCELLULAR LOCATION</scope>
    <scope>TISSUE SPECIFICITY</scope>
    <scope>RECOMBINANT EXPRESSION</scope>
    <source>
        <tissue>Coelomocyte</tissue>
    </source>
</reference>
<reference key="2">
    <citation type="journal article" date="1998" name="J. Biol. Chem.">
        <title>Lysenin, a novel sphingomyelin-specific binding protein.</title>
        <authorList>
            <person name="Yamaji A."/>
            <person name="Sekizawa Y."/>
            <person name="Emoto K."/>
            <person name="Sakuraba H."/>
            <person name="Inoue K."/>
            <person name="Kobayashi H."/>
            <person name="Umeda M."/>
        </authorList>
    </citation>
    <scope>FUNCTION</scope>
</reference>
<reference key="3">
    <citation type="journal article" date="2000" name="J. Exp. Zool.">
        <title>Lethal and non-lethal responses of spermatozoa from a wide variety of vertebrates and invertebrates to lysenin, a protein from the coelomic fluid of the earthworm Eisenia foetida.</title>
        <authorList>
            <person name="Kobayashi H."/>
            <person name="Sekizawa Y."/>
            <person name="Aizu M."/>
            <person name="Umeda M."/>
        </authorList>
    </citation>
    <scope>FUNCTION</scope>
</reference>
<reference key="4">
    <citation type="journal article" date="2003" name="J. Biol. Chem.">
        <title>Oligomerization and pore formation of a sphingomyelin-specific toxin, lysenin.</title>
        <authorList>
            <person name="Yamaji-Hasegawa A."/>
            <person name="Makino A."/>
            <person name="Baba T."/>
            <person name="Senoh Y."/>
            <person name="Kimura-Suda H."/>
            <person name="Sato S.B."/>
            <person name="Terada N."/>
            <person name="Ohno S."/>
            <person name="Kiyokawa E."/>
            <person name="Umeda M."/>
            <person name="Kobayashi T."/>
        </authorList>
    </citation>
    <scope>FUNCTION</scope>
</reference>
<reference key="5">
    <citation type="journal article" date="2004" name="Biochemistry">
        <title>Recognition of sphingomyelin by lysenin and lysenin-related proteins.</title>
        <authorList>
            <person name="Kiyokawa E."/>
            <person name="Makino A."/>
            <person name="Ishii K."/>
            <person name="Otsuka N."/>
            <person name="Yamaji-Hasegawa A."/>
            <person name="Kobayashi T."/>
        </authorList>
    </citation>
    <scope>FUNCTION</scope>
    <scope>MUTAGENESIS OF TRP-20; TRP-116; TRP-187; TRP-206; TRP-245 AND TRP-291</scope>
    <scope>SITES</scope>
</reference>
<reference key="6">
    <citation type="journal article" date="2006" name="Biomed. Res.">
        <title>Exfoliation of the epidermal cells and defecation by amphibian larvae in response to coelomic fluid and lysenin from the earthworm Eisenia foetida.</title>
        <authorList>
            <person name="Kobayashi H."/>
            <person name="Suzuki H."/>
            <person name="Ohta N."/>
        </authorList>
    </citation>
    <scope>FUNCTION</scope>
</reference>
<reference evidence="18 19 20" key="7">
    <citation type="journal article" date="2012" name="Structure">
        <title>Structures of lysenin reveal a shared evolutionary origin for pore-forming proteins and its mode of sphingomyelin recognition.</title>
        <authorList>
            <person name="De Colibus L."/>
            <person name="Sonnen A.F."/>
            <person name="Morris K.J."/>
            <person name="Siebert C.A."/>
            <person name="Abrusci P."/>
            <person name="Plitzko J."/>
            <person name="Hodnik V."/>
            <person name="Leippe M."/>
            <person name="Volpi E."/>
            <person name="Anderluh G."/>
            <person name="Gilbert R.J."/>
        </authorList>
    </citation>
    <scope>X-RAY CRYSTALLOGRAPHY (2.84 ANGSTROMS) IN COMPLEX WITH SPHINGOMYELIN AND ALONE</scope>
    <scope>MUTAGENESIS OF LYS-21; TYR-24; TYR-26; GLN-117 AND GLU-128</scope>
    <scope>RECOMBINANT EXPRESSION</scope>
</reference>
<reference evidence="22" key="8">
    <citation type="journal article" date="2016" name="Nat. Commun.">
        <title>Cryo-EM structure of lysenin pore elucidates membrane insertion by an aerolysin family protein.</title>
        <authorList>
            <person name="Bokori-Brown M."/>
            <person name="Martin T.G."/>
            <person name="Naylor C.E."/>
            <person name="Basak A.K."/>
            <person name="Titball R.W."/>
            <person name="Savva C.G."/>
        </authorList>
    </citation>
    <scope>STRUCTURE BY ELECTRON MICROSCOPY (3.14 ANGSTROMS) IN HOMO-NONAMERIC FORM</scope>
    <scope>SUBUNIT</scope>
</reference>
<reference evidence="21" key="9">
    <citation type="journal article" date="2016" name="Nat. Commun.">
        <title>Crystal structure of an invertebrate cytolysin pore reveals unique properties and mechanism of assembly.</title>
        <authorList>
            <person name="Podobnik M."/>
            <person name="Savory P."/>
            <person name="Rojko N."/>
            <person name="Kisovec M."/>
            <person name="Wood N."/>
            <person name="Hambley R."/>
            <person name="Pugh J."/>
            <person name="Wallace E.J."/>
            <person name="McNeill L."/>
            <person name="Bruce M."/>
            <person name="Liko I."/>
            <person name="Allison T.M."/>
            <person name="Mehmood S."/>
            <person name="Yilmaz N."/>
            <person name="Kobayashi T."/>
            <person name="Gilbert R.J."/>
            <person name="Robinson C.V."/>
            <person name="Jayasinghe L."/>
            <person name="Anderluh G."/>
        </authorList>
    </citation>
    <scope>X-RAY CRYSTALLOGRAPHY (3.1 ANGSTROMS) IN HOMO-NONAMERIC FORM</scope>
    <scope>SUBUNIT</scope>
    <scope>MUTAGENESIS OF VAL-88 AND TYR-131</scope>
    <scope>BIOTECHNOLOGY</scope>
    <scope>RECOMBINANT EXPRESSION</scope>
</reference>
<sequence length="297" mass="33441">MSAKAAEGYEQIEVDVVAVWKEGYVYENRGSTSVDQKITITKGMKNVNSETRTVTATHSIGSTISTGDAFEIGSVEVSYSHSHEESQVSMTETEVYESKVIEHTITIPPTSKFTRWQLNADVGGADIEYMYLIDEVTPIGGTQSIPQVITSRAKIIVGRQIILGKTEIRIKHAERKEYMTVVSRKSWPAATLGHSKLFKFVLYEDWGGFRIKTLNTMYSGYEYAYSSDQGGIYFDQGTDNPKQRWAINKSLPLRHGDVVTFMNKYFTRSGLCYDDGPATNVYCLDKREDKWILEVVG</sequence>
<accession>O18423</accession>
<name>TXL_EISFE</name>
<proteinExistence type="evidence at protein level"/>
<evidence type="ECO:0000255" key="1"/>
<evidence type="ECO:0000269" key="2">
    <source>
    </source>
</evidence>
<evidence type="ECO:0000269" key="3">
    <source>
    </source>
</evidence>
<evidence type="ECO:0000269" key="4">
    <source>
    </source>
</evidence>
<evidence type="ECO:0000269" key="5">
    <source>
    </source>
</evidence>
<evidence type="ECO:0000269" key="6">
    <source>
    </source>
</evidence>
<evidence type="ECO:0000269" key="7">
    <source>
    </source>
</evidence>
<evidence type="ECO:0000269" key="8">
    <source>
    </source>
</evidence>
<evidence type="ECO:0000269" key="9">
    <source>
    </source>
</evidence>
<evidence type="ECO:0000269" key="10">
    <source>
    </source>
</evidence>
<evidence type="ECO:0000303" key="11">
    <source>
    </source>
</evidence>
<evidence type="ECO:0000303" key="12">
    <source>
    </source>
</evidence>
<evidence type="ECO:0000303" key="13">
    <source>
    </source>
</evidence>
<evidence type="ECO:0000305" key="14"/>
<evidence type="ECO:0000305" key="15">
    <source>
    </source>
</evidence>
<evidence type="ECO:0000305" key="16">
    <source>
    </source>
</evidence>
<evidence type="ECO:0000305" key="17">
    <source>
    </source>
</evidence>
<evidence type="ECO:0000312" key="18">
    <source>
        <dbReference type="PDB" id="3ZX7"/>
    </source>
</evidence>
<evidence type="ECO:0000312" key="19">
    <source>
        <dbReference type="PDB" id="3ZXD"/>
    </source>
</evidence>
<evidence type="ECO:0000312" key="20">
    <source>
        <dbReference type="PDB" id="3ZXG"/>
    </source>
</evidence>
<evidence type="ECO:0000312" key="21">
    <source>
        <dbReference type="PDB" id="5EC5"/>
    </source>
</evidence>
<evidence type="ECO:0000312" key="22">
    <source>
        <dbReference type="PDB" id="5GAQ"/>
    </source>
</evidence>
<evidence type="ECO:0007829" key="23">
    <source>
        <dbReference type="PDB" id="3ZX7"/>
    </source>
</evidence>
<evidence type="ECO:0007829" key="24">
    <source>
        <dbReference type="PDB" id="5GAQ"/>
    </source>
</evidence>